<dbReference type="EMBL" id="CP001364">
    <property type="protein sequence ID" value="ACM51995.1"/>
    <property type="molecule type" value="Genomic_DNA"/>
</dbReference>
<dbReference type="SMR" id="B9LJ33"/>
<dbReference type="KEGG" id="chl:Chy400_0558"/>
<dbReference type="HOGENOM" id="CLU_140930_1_0_0"/>
<dbReference type="OrthoDB" id="9795263at2"/>
<dbReference type="GO" id="GO:0043590">
    <property type="term" value="C:bacterial nucleoid"/>
    <property type="evidence" value="ECO:0007669"/>
    <property type="project" value="UniProtKB-UniRule"/>
</dbReference>
<dbReference type="GO" id="GO:0005829">
    <property type="term" value="C:cytosol"/>
    <property type="evidence" value="ECO:0007669"/>
    <property type="project" value="TreeGrafter"/>
</dbReference>
<dbReference type="GO" id="GO:0003677">
    <property type="term" value="F:DNA binding"/>
    <property type="evidence" value="ECO:0007669"/>
    <property type="project" value="UniProtKB-UniRule"/>
</dbReference>
<dbReference type="FunFam" id="3.30.1310.10:FF:000011">
    <property type="entry name" value="Nucleoid-associated protein D6716_02630"/>
    <property type="match status" value="1"/>
</dbReference>
<dbReference type="Gene3D" id="3.30.1310.10">
    <property type="entry name" value="Nucleoid-associated protein YbaB-like domain"/>
    <property type="match status" value="1"/>
</dbReference>
<dbReference type="HAMAP" id="MF_00274">
    <property type="entry name" value="DNA_YbaB_EbfC"/>
    <property type="match status" value="1"/>
</dbReference>
<dbReference type="InterPro" id="IPR036894">
    <property type="entry name" value="YbaB-like_sf"/>
</dbReference>
<dbReference type="InterPro" id="IPR004401">
    <property type="entry name" value="YbaB/EbfC"/>
</dbReference>
<dbReference type="NCBIfam" id="TIGR00103">
    <property type="entry name" value="DNA_YbaB_EbfC"/>
    <property type="match status" value="1"/>
</dbReference>
<dbReference type="PANTHER" id="PTHR33449">
    <property type="entry name" value="NUCLEOID-ASSOCIATED PROTEIN YBAB"/>
    <property type="match status" value="1"/>
</dbReference>
<dbReference type="PANTHER" id="PTHR33449:SF1">
    <property type="entry name" value="NUCLEOID-ASSOCIATED PROTEIN YBAB"/>
    <property type="match status" value="1"/>
</dbReference>
<dbReference type="Pfam" id="PF02575">
    <property type="entry name" value="YbaB_DNA_bd"/>
    <property type="match status" value="1"/>
</dbReference>
<dbReference type="PIRSF" id="PIRSF004555">
    <property type="entry name" value="UCP004555"/>
    <property type="match status" value="1"/>
</dbReference>
<dbReference type="SUPFAM" id="SSF82607">
    <property type="entry name" value="YbaB-like"/>
    <property type="match status" value="1"/>
</dbReference>
<comment type="function">
    <text evidence="1">Binds to DNA and alters its conformation. May be involved in regulation of gene expression, nucleoid organization and DNA protection.</text>
</comment>
<comment type="subunit">
    <text evidence="1">Homodimer.</text>
</comment>
<comment type="subcellular location">
    <subcellularLocation>
        <location evidence="1">Cytoplasm</location>
        <location evidence="1">Nucleoid</location>
    </subcellularLocation>
</comment>
<comment type="similarity">
    <text evidence="1">Belongs to the YbaB/EbfC family.</text>
</comment>
<keyword id="KW-0963">Cytoplasm</keyword>
<keyword id="KW-0238">DNA-binding</keyword>
<proteinExistence type="inferred from homology"/>
<evidence type="ECO:0000255" key="1">
    <source>
        <dbReference type="HAMAP-Rule" id="MF_00274"/>
    </source>
</evidence>
<accession>B9LJ33</accession>
<reference key="1">
    <citation type="submission" date="2009-01" db="EMBL/GenBank/DDBJ databases">
        <title>Complete sequence of Chloroflexus sp. Y-400-fl.</title>
        <authorList>
            <consortium name="US DOE Joint Genome Institute"/>
            <person name="Lucas S."/>
            <person name="Copeland A."/>
            <person name="Lapidus A."/>
            <person name="Glavina del Rio T."/>
            <person name="Dalin E."/>
            <person name="Tice H."/>
            <person name="Bruce D."/>
            <person name="Goodwin L."/>
            <person name="Pitluck S."/>
            <person name="Sims D."/>
            <person name="Kiss H."/>
            <person name="Brettin T."/>
            <person name="Detter J.C."/>
            <person name="Han C."/>
            <person name="Larimer F."/>
            <person name="Land M."/>
            <person name="Hauser L."/>
            <person name="Kyrpides N."/>
            <person name="Ovchinnikova G."/>
            <person name="Bryant D.A."/>
            <person name="Richardson P."/>
        </authorList>
    </citation>
    <scope>NUCLEOTIDE SEQUENCE [LARGE SCALE GENOMIC DNA]</scope>
    <source>
        <strain>ATCC 29364 / DSM 637 / Y-400-fl</strain>
    </source>
</reference>
<sequence length="100" mass="11035">MNQRQLMQMAQQMQRQMQKVQEELAATIVEGTAGGGAITVKMNGHREVQSITISPEVVDPDDVEMLQDLLLVAINDASRKAQQLAEERMQPLTGGLKGLF</sequence>
<protein>
    <recommendedName>
        <fullName evidence="1">Nucleoid-associated protein Chy400_0558</fullName>
    </recommendedName>
</protein>
<name>Y558_CHLSY</name>
<organism>
    <name type="scientific">Chloroflexus aurantiacus (strain ATCC 29364 / DSM 637 / Y-400-fl)</name>
    <dbReference type="NCBI Taxonomy" id="480224"/>
    <lineage>
        <taxon>Bacteria</taxon>
        <taxon>Bacillati</taxon>
        <taxon>Chloroflexota</taxon>
        <taxon>Chloroflexia</taxon>
        <taxon>Chloroflexales</taxon>
        <taxon>Chloroflexineae</taxon>
        <taxon>Chloroflexaceae</taxon>
        <taxon>Chloroflexus</taxon>
    </lineage>
</organism>
<feature type="chain" id="PRO_1000197650" description="Nucleoid-associated protein Chy400_0558">
    <location>
        <begin position="1"/>
        <end position="100"/>
    </location>
</feature>
<gene>
    <name type="ordered locus">Chy400_0558</name>
</gene>